<sequence>MPPRPNKRQQREQEELESLGGPSHEGEVSSEDEVAKRSVKNIAGAGFAALLTPEEDGQDSGDAGSPQPTRKTKKKKKKGPAPPRSQTPVMTEPPQSSRTSPNIPVHPKNEKKATKKAKAREKKAGKDELDKALAELSVNEAEMRKFFGAKVVQANKSTSAGASGSSSRRKPGVLRSNLTHPQPSWWAAKQREGLSIRVLTESETEAKMERQKWDTNEEEKWWTVEYSKKYKSMTMAFMQTVMSGDPEGFWNLLGKLPWHADTLLQLSEVYRHREEYAQAMDFVDRALFTYERSFIGAFTFTSGLNRLDFDHVENRPFFLAIHRQATDLQRRGCVRTAFEFARLLYSLDPWNDPHGALFHLDFLALKAGMSQWLLDVFDLFAARKETEAGVRDSRLNPSLLPGWSYARALALRIDEDANKDGIHTASTSALIEAITSFPSVVPLLADKLDVSLPTSIRSHRNFRIETDSSSLSPSVAALHLLSHLYVQRSFSLWKDAAHCAWFSSTVTSTFSSVSSVLPTTDRHNQFLSLYSNPSPQYSAYRHIMVLEASYRRLFSFIPRHVLNAKSLACDPLPPPTTVTEYNQAFFAGTDDLFALRSRTRQERVADERRLERLIPDAAFRGQLQAFFEAHPNFAERFPGGIVQFAQIAGQLPEDVLEDMMLAEAMGGEGLQDGGMPGQMPGFADFMNEGVDERQEPLAGVDNAPIRLVDHRQENLDAGVGAGADEDDEVEDDDEDEDEEVAPMPVRVLRNLLGRFWGGNTVAEDSSDDEGDRPPPVDDGGVD</sequence>
<keyword id="KW-0539">Nucleus</keyword>
<keyword id="KW-0804">Transcription</keyword>
<keyword id="KW-0805">Transcription regulation</keyword>
<name>CLAV_AMPCV</name>
<gene>
    <name evidence="3" type="primary">claV</name>
</gene>
<feature type="chain" id="PRO_0000461441" description="Probable transcription factor claV">
    <location>
        <begin position="1"/>
        <end position="782"/>
    </location>
</feature>
<feature type="region of interest" description="Disordered" evidence="1">
    <location>
        <begin position="1"/>
        <end position="37"/>
    </location>
</feature>
<feature type="region of interest" description="Disordered" evidence="1">
    <location>
        <begin position="49"/>
        <end position="128"/>
    </location>
</feature>
<feature type="region of interest" description="Disordered" evidence="1">
    <location>
        <begin position="156"/>
        <end position="180"/>
    </location>
</feature>
<feature type="region of interest" description="Disordered" evidence="1">
    <location>
        <begin position="717"/>
        <end position="745"/>
    </location>
</feature>
<feature type="region of interest" description="Disordered" evidence="1">
    <location>
        <begin position="758"/>
        <end position="782"/>
    </location>
</feature>
<feature type="compositionally biased region" description="Basic residues" evidence="1">
    <location>
        <begin position="70"/>
        <end position="79"/>
    </location>
</feature>
<feature type="compositionally biased region" description="Polar residues" evidence="1">
    <location>
        <begin position="86"/>
        <end position="102"/>
    </location>
</feature>
<feature type="compositionally biased region" description="Low complexity" evidence="1">
    <location>
        <begin position="157"/>
        <end position="166"/>
    </location>
</feature>
<feature type="compositionally biased region" description="Acidic residues" evidence="1">
    <location>
        <begin position="723"/>
        <end position="740"/>
    </location>
</feature>
<evidence type="ECO:0000256" key="1">
    <source>
        <dbReference type="SAM" id="MobiDB-lite"/>
    </source>
</evidence>
<evidence type="ECO:0000269" key="2">
    <source>
    </source>
</evidence>
<evidence type="ECO:0000303" key="3">
    <source>
    </source>
</evidence>
<evidence type="ECO:0000305" key="4"/>
<evidence type="ECO:0000305" key="5">
    <source>
    </source>
</evidence>
<proteinExistence type="predicted"/>
<reference key="1">
    <citation type="journal article" date="2024" name="J. Am. Chem. Soc.">
        <title>Two cytochrome P450 enzymes form the tricyclic nested skeleton of meroterpenoids by sequential oxidative reactions.</title>
        <authorList>
            <person name="Yang E."/>
            <person name="Yao Y."/>
            <person name="Su H."/>
            <person name="Sun Z."/>
            <person name="Gao S.S."/>
            <person name="Sureram S."/>
            <person name="Kittakoop P."/>
            <person name="Fan K."/>
            <person name="Pan Y."/>
            <person name="Xu X."/>
            <person name="Sun Z.H."/>
            <person name="Ma G."/>
            <person name="Liu G."/>
        </authorList>
    </citation>
    <scope>NUCLEOTIDE SEQUENCE [GENOMIC DNA]</scope>
    <scope>FUNCTION</scope>
    <scope>PATHWAY</scope>
</reference>
<dbReference type="EMBL" id="PP505398">
    <property type="protein sequence ID" value="WYC13325.1"/>
    <property type="molecule type" value="Genomic_DNA"/>
</dbReference>
<dbReference type="SMR" id="P9WEI3"/>
<dbReference type="UniPathway" id="UPA00213"/>
<dbReference type="GO" id="GO:0005634">
    <property type="term" value="C:nucleus"/>
    <property type="evidence" value="ECO:0007669"/>
    <property type="project" value="UniProtKB-SubCell"/>
</dbReference>
<dbReference type="GO" id="GO:1990112">
    <property type="term" value="C:RQC complex"/>
    <property type="evidence" value="ECO:0007669"/>
    <property type="project" value="TreeGrafter"/>
</dbReference>
<dbReference type="GO" id="GO:0072344">
    <property type="term" value="P:rescue of stalled ribosome"/>
    <property type="evidence" value="ECO:0007669"/>
    <property type="project" value="TreeGrafter"/>
</dbReference>
<dbReference type="GO" id="GO:1990116">
    <property type="term" value="P:ribosome-associated ubiquitin-dependent protein catabolic process"/>
    <property type="evidence" value="ECO:0007669"/>
    <property type="project" value="TreeGrafter"/>
</dbReference>
<dbReference type="InterPro" id="IPR006994">
    <property type="entry name" value="TCF25/Rqc1"/>
</dbReference>
<dbReference type="PANTHER" id="PTHR22684">
    <property type="entry name" value="NULP1-RELATED"/>
    <property type="match status" value="1"/>
</dbReference>
<dbReference type="PANTHER" id="PTHR22684:SF0">
    <property type="entry name" value="RIBOSOME QUALITY CONTROL COMPLEX SUBUNIT TCF25"/>
    <property type="match status" value="1"/>
</dbReference>
<dbReference type="Pfam" id="PF04910">
    <property type="entry name" value="Tcf25"/>
    <property type="match status" value="1"/>
</dbReference>
<comment type="function">
    <text evidence="2">Probable transcription factor; part of the gene cluster that mediates the biosynthesis of clavilactone A, a meroterpenoid that features a unique benzo-fused ten-membered carbocyclic ring unit with an alpha,beta-epoxy-gamma-lactone moiety, forming an intriguing 10/5/3 tricyclic nested skeleton.</text>
</comment>
<comment type="pathway">
    <text evidence="5">Secondary metabolite biosynthesis; terpenoid biosynthesis.</text>
</comment>
<comment type="subcellular location">
    <subcellularLocation>
        <location evidence="4">Nucleus</location>
    </subcellularLocation>
</comment>
<accession>P9WEI3</accession>
<protein>
    <recommendedName>
        <fullName evidence="3">Probable transcription factor claV</fullName>
    </recommendedName>
    <alternativeName>
        <fullName evidence="3">Clavilactone A biosynthesis cluster protein V</fullName>
    </alternativeName>
</protein>
<organism>
    <name type="scientific">Ampulloclitocybe clavipes</name>
    <name type="common">Club foot</name>
    <name type="synonym">Clitocybe clavipes</name>
    <dbReference type="NCBI Taxonomy" id="56467"/>
    <lineage>
        <taxon>Eukaryota</taxon>
        <taxon>Fungi</taxon>
        <taxon>Dikarya</taxon>
        <taxon>Basidiomycota</taxon>
        <taxon>Agaricomycotina</taxon>
        <taxon>Agaricomycetes</taxon>
        <taxon>Agaricomycetidae</taxon>
        <taxon>Agaricales</taxon>
        <taxon>Hygrophoraceae</taxon>
        <taxon>Ampulloclitocybe</taxon>
    </lineage>
</organism>